<reference key="1">
    <citation type="journal article" date="1999" name="Plant Mol. Biol.">
        <title>Heterologous expression in Saccharomyces cerevisiae of an Arabidopsis thaliana cDNA encoding mevalonate diphosphate decarboxylase.</title>
        <authorList>
            <person name="Cordier H."/>
            <person name="Karst F."/>
            <person name="Berges T."/>
        </authorList>
    </citation>
    <scope>NUCLEOTIDE SEQUENCE [GENOMIC DNA / MRNA]</scope>
    <scope>FUNCTION</scope>
    <scope>SUBUNIT</scope>
</reference>
<reference key="2">
    <citation type="journal article" date="1999" name="Nature">
        <title>Sequence and analysis of chromosome 2 of the plant Arabidopsis thaliana.</title>
        <authorList>
            <person name="Lin X."/>
            <person name="Kaul S."/>
            <person name="Rounsley S.D."/>
            <person name="Shea T.P."/>
            <person name="Benito M.-I."/>
            <person name="Town C.D."/>
            <person name="Fujii C.Y."/>
            <person name="Mason T.M."/>
            <person name="Bowman C.L."/>
            <person name="Barnstead M.E."/>
            <person name="Feldblyum T.V."/>
            <person name="Buell C.R."/>
            <person name="Ketchum K.A."/>
            <person name="Lee J.J."/>
            <person name="Ronning C.M."/>
            <person name="Koo H.L."/>
            <person name="Moffat K.S."/>
            <person name="Cronin L.A."/>
            <person name="Shen M."/>
            <person name="Pai G."/>
            <person name="Van Aken S."/>
            <person name="Umayam L."/>
            <person name="Tallon L.J."/>
            <person name="Gill J.E."/>
            <person name="Adams M.D."/>
            <person name="Carrera A.J."/>
            <person name="Creasy T.H."/>
            <person name="Goodman H.M."/>
            <person name="Somerville C.R."/>
            <person name="Copenhaver G.P."/>
            <person name="Preuss D."/>
            <person name="Nierman W.C."/>
            <person name="White O."/>
            <person name="Eisen J.A."/>
            <person name="Salzberg S.L."/>
            <person name="Fraser C.M."/>
            <person name="Venter J.C."/>
        </authorList>
    </citation>
    <scope>NUCLEOTIDE SEQUENCE [LARGE SCALE GENOMIC DNA]</scope>
    <source>
        <strain>cv. Columbia</strain>
    </source>
</reference>
<reference key="3">
    <citation type="journal article" date="2017" name="Plant J.">
        <title>Araport11: a complete reannotation of the Arabidopsis thaliana reference genome.</title>
        <authorList>
            <person name="Cheng C.Y."/>
            <person name="Krishnakumar V."/>
            <person name="Chan A.P."/>
            <person name="Thibaud-Nissen F."/>
            <person name="Schobel S."/>
            <person name="Town C.D."/>
        </authorList>
    </citation>
    <scope>GENOME REANNOTATION</scope>
    <source>
        <strain>cv. Columbia</strain>
    </source>
</reference>
<reference key="4">
    <citation type="journal article" date="2003" name="Science">
        <title>Empirical analysis of transcriptional activity in the Arabidopsis genome.</title>
        <authorList>
            <person name="Yamada K."/>
            <person name="Lim J."/>
            <person name="Dale J.M."/>
            <person name="Chen H."/>
            <person name="Shinn P."/>
            <person name="Palm C.J."/>
            <person name="Southwick A.M."/>
            <person name="Wu H.C."/>
            <person name="Kim C.J."/>
            <person name="Nguyen M."/>
            <person name="Pham P.K."/>
            <person name="Cheuk R.F."/>
            <person name="Karlin-Newmann G."/>
            <person name="Liu S.X."/>
            <person name="Lam B."/>
            <person name="Sakano H."/>
            <person name="Wu T."/>
            <person name="Yu G."/>
            <person name="Miranda M."/>
            <person name="Quach H.L."/>
            <person name="Tripp M."/>
            <person name="Chang C.H."/>
            <person name="Lee J.M."/>
            <person name="Toriumi M.J."/>
            <person name="Chan M.M."/>
            <person name="Tang C.C."/>
            <person name="Onodera C.S."/>
            <person name="Deng J.M."/>
            <person name="Akiyama K."/>
            <person name="Ansari Y."/>
            <person name="Arakawa T."/>
            <person name="Banh J."/>
            <person name="Banno F."/>
            <person name="Bowser L."/>
            <person name="Brooks S.Y."/>
            <person name="Carninci P."/>
            <person name="Chao Q."/>
            <person name="Choy N."/>
            <person name="Enju A."/>
            <person name="Goldsmith A.D."/>
            <person name="Gurjal M."/>
            <person name="Hansen N.F."/>
            <person name="Hayashizaki Y."/>
            <person name="Johnson-Hopson C."/>
            <person name="Hsuan V.W."/>
            <person name="Iida K."/>
            <person name="Karnes M."/>
            <person name="Khan S."/>
            <person name="Koesema E."/>
            <person name="Ishida J."/>
            <person name="Jiang P.X."/>
            <person name="Jones T."/>
            <person name="Kawai J."/>
            <person name="Kamiya A."/>
            <person name="Meyers C."/>
            <person name="Nakajima M."/>
            <person name="Narusaka M."/>
            <person name="Seki M."/>
            <person name="Sakurai T."/>
            <person name="Satou M."/>
            <person name="Tamse R."/>
            <person name="Vaysberg M."/>
            <person name="Wallender E.K."/>
            <person name="Wong C."/>
            <person name="Yamamura Y."/>
            <person name="Yuan S."/>
            <person name="Shinozaki K."/>
            <person name="Davis R.W."/>
            <person name="Theologis A."/>
            <person name="Ecker J.R."/>
        </authorList>
    </citation>
    <scope>NUCLEOTIDE SEQUENCE [LARGE SCALE MRNA]</scope>
    <source>
        <strain>cv. Columbia</strain>
    </source>
</reference>
<reference key="5">
    <citation type="submission" date="2006-07" db="EMBL/GenBank/DDBJ databases">
        <title>Large-scale analysis of RIKEN Arabidopsis full-length (RAFL) cDNAs.</title>
        <authorList>
            <person name="Totoki Y."/>
            <person name="Seki M."/>
            <person name="Ishida J."/>
            <person name="Nakajima M."/>
            <person name="Enju A."/>
            <person name="Kamiya A."/>
            <person name="Narusaka M."/>
            <person name="Shin-i T."/>
            <person name="Nakagawa M."/>
            <person name="Sakamoto N."/>
            <person name="Oishi K."/>
            <person name="Kohara Y."/>
            <person name="Kobayashi M."/>
            <person name="Toyoda A."/>
            <person name="Sakaki Y."/>
            <person name="Sakurai T."/>
            <person name="Iida K."/>
            <person name="Akiyama K."/>
            <person name="Satou M."/>
            <person name="Toyoda T."/>
            <person name="Konagaya A."/>
            <person name="Carninci P."/>
            <person name="Kawai J."/>
            <person name="Hayashizaki Y."/>
            <person name="Shinozaki K."/>
        </authorList>
    </citation>
    <scope>NUCLEOTIDE SEQUENCE [LARGE SCALE MRNA]</scope>
    <source>
        <strain>cv. Columbia</strain>
    </source>
</reference>
<reference key="6">
    <citation type="submission" date="2002-03" db="EMBL/GenBank/DDBJ databases">
        <title>Full-length cDNA from Arabidopsis thaliana.</title>
        <authorList>
            <person name="Brover V.V."/>
            <person name="Troukhan M.E."/>
            <person name="Alexandrov N.A."/>
            <person name="Lu Y.-P."/>
            <person name="Flavell R.B."/>
            <person name="Feldmann K.A."/>
        </authorList>
    </citation>
    <scope>NUCLEOTIDE SEQUENCE [LARGE SCALE MRNA]</scope>
</reference>
<reference key="7">
    <citation type="journal article" date="2011" name="Planta">
        <title>Peroxisomal localisation of the final steps of the mevalonic acid pathway in planta.</title>
        <authorList>
            <person name="Simkin A.J."/>
            <person name="Guirimand G."/>
            <person name="Papon N."/>
            <person name="Courdavault V."/>
            <person name="Thabet I."/>
            <person name="Ginis O."/>
            <person name="Bouzid S."/>
            <person name="Giglioli-Guivarc'h N."/>
            <person name="Clastre M."/>
        </authorList>
    </citation>
    <scope>SUBCELLULAR LOCATION</scope>
</reference>
<reference key="8">
    <citation type="journal article" date="2013" name="Elife">
        <title>Discovery of a metabolic alternative to the classical mevalonate pathway.</title>
        <authorList>
            <person name="Dellas N."/>
            <person name="Thomas S.T."/>
            <person name="Manning G."/>
            <person name="Noel J.P."/>
        </authorList>
    </citation>
    <scope>CATALYTIC ACTIVITY</scope>
    <scope>BIOPHYSICOCHEMICAL PROPERTIES</scope>
</reference>
<reference key="9">
    <citation type="journal article" date="2015" name="Proc. Natl. Acad. Sci. U.S.A.">
        <title>Orthologs of the archaeal isopentenyl phosphate kinase regulate terpenoid production in plants.</title>
        <authorList>
            <person name="Henry L.K."/>
            <person name="Gutensohn M."/>
            <person name="Thomas S.T."/>
            <person name="Noel J.P."/>
            <person name="Dudareva N."/>
        </authorList>
    </citation>
    <scope>FUNCTION</scope>
    <scope>CATALYTIC ACTIVITY</scope>
    <scope>BIOPHYSICOCHEMICAL PROPERTIES</scope>
    <scope>DISRUPTION PHENOTYPE</scope>
</reference>
<reference key="10">
    <citation type="journal article" date="2019" name="ACS Chem. Biol.">
        <title>Substrate specificity and engineering of mevalonate 5-phosphate decarboxylase.</title>
        <authorList>
            <person name="Thomas S.T."/>
            <person name="Louie G.V."/>
            <person name="Lubin J.W."/>
            <person name="Lundblad V."/>
            <person name="Noel J.P."/>
        </authorList>
    </citation>
    <scope>X-RAY CRYSTALLOGRAPHY (2.30 ANGSTROMS) IN COMPLEX WITH (R)-5-DIPHOSPHOMEVALONATE</scope>
</reference>
<proteinExistence type="evidence at protein level"/>
<protein>
    <recommendedName>
        <fullName evidence="8">Diphosphomevalonate decarboxylase MVD1, peroxisomal</fullName>
        <ecNumber evidence="3 4">4.1.1.33</ecNumber>
    </recommendedName>
    <alternativeName>
        <fullName evidence="7">Mevalonate 5-diphosphate decarboxylase 1</fullName>
        <shortName evidence="7">AtMDD1</shortName>
        <shortName evidence="6">AtMVD1</shortName>
    </alternativeName>
</protein>
<name>MVD1_ARATH</name>
<accession>O23722</accession>
<accession>Q8LB37</accession>
<evidence type="ECO:0000269" key="1">
    <source>
    </source>
</evidence>
<evidence type="ECO:0000269" key="2">
    <source>
    </source>
</evidence>
<evidence type="ECO:0000269" key="3">
    <source>
    </source>
</evidence>
<evidence type="ECO:0000269" key="4">
    <source>
    </source>
</evidence>
<evidence type="ECO:0000269" key="5">
    <source>
    </source>
</evidence>
<evidence type="ECO:0000303" key="6">
    <source>
    </source>
</evidence>
<evidence type="ECO:0000303" key="7">
    <source>
    </source>
</evidence>
<evidence type="ECO:0000305" key="8"/>
<evidence type="ECO:0000305" key="9">
    <source>
    </source>
</evidence>
<evidence type="ECO:0000312" key="10">
    <source>
        <dbReference type="Araport" id="AT2G38700"/>
    </source>
</evidence>
<evidence type="ECO:0007744" key="11">
    <source>
        <dbReference type="PDB" id="6N10"/>
    </source>
</evidence>
<evidence type="ECO:0007829" key="12">
    <source>
        <dbReference type="PDB" id="6N10"/>
    </source>
</evidence>
<organism>
    <name type="scientific">Arabidopsis thaliana</name>
    <name type="common">Mouse-ear cress</name>
    <dbReference type="NCBI Taxonomy" id="3702"/>
    <lineage>
        <taxon>Eukaryota</taxon>
        <taxon>Viridiplantae</taxon>
        <taxon>Streptophyta</taxon>
        <taxon>Embryophyta</taxon>
        <taxon>Tracheophyta</taxon>
        <taxon>Spermatophyta</taxon>
        <taxon>Magnoliopsida</taxon>
        <taxon>eudicotyledons</taxon>
        <taxon>Gunneridae</taxon>
        <taxon>Pentapetalae</taxon>
        <taxon>rosids</taxon>
        <taxon>malvids</taxon>
        <taxon>Brassicales</taxon>
        <taxon>Brassicaceae</taxon>
        <taxon>Camelineae</taxon>
        <taxon>Arabidopsis</taxon>
    </lineage>
</organism>
<dbReference type="EC" id="4.1.1.33" evidence="3 4"/>
<dbReference type="EMBL" id="Y14325">
    <property type="protein sequence ID" value="CAA74700.1"/>
    <property type="molecule type" value="mRNA"/>
</dbReference>
<dbReference type="EMBL" id="Y17593">
    <property type="protein sequence ID" value="CAA76803.1"/>
    <property type="molecule type" value="Genomic_DNA"/>
</dbReference>
<dbReference type="EMBL" id="AC005499">
    <property type="protein sequence ID" value="AAC67348.1"/>
    <property type="molecule type" value="Genomic_DNA"/>
</dbReference>
<dbReference type="EMBL" id="CP002685">
    <property type="protein sequence ID" value="AEC09574.1"/>
    <property type="molecule type" value="Genomic_DNA"/>
</dbReference>
<dbReference type="EMBL" id="BT008769">
    <property type="protein sequence ID" value="AAP68208.1"/>
    <property type="molecule type" value="mRNA"/>
</dbReference>
<dbReference type="EMBL" id="AK228357">
    <property type="protein sequence ID" value="BAF00296.1"/>
    <property type="molecule type" value="mRNA"/>
</dbReference>
<dbReference type="EMBL" id="AY087442">
    <property type="protein sequence ID" value="AAM64988.1"/>
    <property type="status" value="ALT_INIT"/>
    <property type="molecule type" value="mRNA"/>
</dbReference>
<dbReference type="PIR" id="T52625">
    <property type="entry name" value="T52625"/>
</dbReference>
<dbReference type="RefSeq" id="NP_181404.1">
    <property type="nucleotide sequence ID" value="NM_129427.5"/>
</dbReference>
<dbReference type="PDB" id="6N10">
    <property type="method" value="X-ray"/>
    <property type="resolution" value="2.30 A"/>
    <property type="chains" value="A=1-412"/>
</dbReference>
<dbReference type="PDBsum" id="6N10"/>
<dbReference type="SMR" id="O23722"/>
<dbReference type="FunCoup" id="O23722">
    <property type="interactions" value="2825"/>
</dbReference>
<dbReference type="STRING" id="3702.O23722"/>
<dbReference type="PaxDb" id="3702-AT2G38700.1"/>
<dbReference type="ProteomicsDB" id="251369"/>
<dbReference type="EnsemblPlants" id="AT2G38700.1">
    <property type="protein sequence ID" value="AT2G38700.1"/>
    <property type="gene ID" value="AT2G38700"/>
</dbReference>
<dbReference type="GeneID" id="818452"/>
<dbReference type="Gramene" id="AT2G38700.1">
    <property type="protein sequence ID" value="AT2G38700.1"/>
    <property type="gene ID" value="AT2G38700"/>
</dbReference>
<dbReference type="KEGG" id="ath:AT2G38700"/>
<dbReference type="Araport" id="AT2G38700"/>
<dbReference type="TAIR" id="AT2G38700">
    <property type="gene designation" value="MVD1"/>
</dbReference>
<dbReference type="eggNOG" id="KOG2833">
    <property type="taxonomic scope" value="Eukaryota"/>
</dbReference>
<dbReference type="HOGENOM" id="CLU_040369_4_4_1"/>
<dbReference type="InParanoid" id="O23722"/>
<dbReference type="OMA" id="LYCFPPK"/>
<dbReference type="OrthoDB" id="10253702at2759"/>
<dbReference type="PhylomeDB" id="O23722"/>
<dbReference type="BioCyc" id="ARA:AT2G38700-MONOMER"/>
<dbReference type="BioCyc" id="MetaCyc:AT2G38700-MONOMER"/>
<dbReference type="BRENDA" id="4.1.1.33">
    <property type="organism ID" value="399"/>
</dbReference>
<dbReference type="UniPathway" id="UPA00057">
    <property type="reaction ID" value="UER00100"/>
</dbReference>
<dbReference type="PRO" id="PR:O23722"/>
<dbReference type="Proteomes" id="UP000006548">
    <property type="component" value="Chromosome 2"/>
</dbReference>
<dbReference type="ExpressionAtlas" id="O23722">
    <property type="expression patterns" value="baseline and differential"/>
</dbReference>
<dbReference type="GO" id="GO:0005829">
    <property type="term" value="C:cytosol"/>
    <property type="evidence" value="ECO:0007005"/>
    <property type="project" value="TAIR"/>
</dbReference>
<dbReference type="GO" id="GO:0005777">
    <property type="term" value="C:peroxisome"/>
    <property type="evidence" value="ECO:0000314"/>
    <property type="project" value="UniProtKB"/>
</dbReference>
<dbReference type="GO" id="GO:0005524">
    <property type="term" value="F:ATP binding"/>
    <property type="evidence" value="ECO:0007669"/>
    <property type="project" value="UniProtKB-KW"/>
</dbReference>
<dbReference type="GO" id="GO:0004163">
    <property type="term" value="F:diphosphomevalonate decarboxylase activity"/>
    <property type="evidence" value="ECO:0000314"/>
    <property type="project" value="UniProtKB"/>
</dbReference>
<dbReference type="GO" id="GO:0042802">
    <property type="term" value="F:identical protein binding"/>
    <property type="evidence" value="ECO:0000353"/>
    <property type="project" value="UniProtKB"/>
</dbReference>
<dbReference type="GO" id="GO:0019287">
    <property type="term" value="P:isopentenyl diphosphate biosynthetic process, mevalonate pathway"/>
    <property type="evidence" value="ECO:0000314"/>
    <property type="project" value="UniProtKB"/>
</dbReference>
<dbReference type="GO" id="GO:0016126">
    <property type="term" value="P:sterol biosynthetic process"/>
    <property type="evidence" value="ECO:0007669"/>
    <property type="project" value="UniProtKB-KW"/>
</dbReference>
<dbReference type="FunFam" id="3.30.230.10:FF:000018">
    <property type="entry name" value="Diphosphomevalonate decarboxylase"/>
    <property type="match status" value="1"/>
</dbReference>
<dbReference type="FunFam" id="3.30.70.890:FF:000005">
    <property type="entry name" value="Diphosphomevalonate decarboxylase"/>
    <property type="match status" value="1"/>
</dbReference>
<dbReference type="Gene3D" id="3.30.230.10">
    <property type="match status" value="1"/>
</dbReference>
<dbReference type="Gene3D" id="3.30.70.890">
    <property type="entry name" value="GHMP kinase, C-terminal domain"/>
    <property type="match status" value="1"/>
</dbReference>
<dbReference type="InterPro" id="IPR036554">
    <property type="entry name" value="GHMP_kinase_C_sf"/>
</dbReference>
<dbReference type="InterPro" id="IPR005935">
    <property type="entry name" value="Mev_decarb"/>
</dbReference>
<dbReference type="InterPro" id="IPR029765">
    <property type="entry name" value="Mev_diP_decarb"/>
</dbReference>
<dbReference type="InterPro" id="IPR053859">
    <property type="entry name" value="MVD-like_N"/>
</dbReference>
<dbReference type="InterPro" id="IPR041431">
    <property type="entry name" value="Mvd1_C"/>
</dbReference>
<dbReference type="InterPro" id="IPR020568">
    <property type="entry name" value="Ribosomal_Su5_D2-typ_SF"/>
</dbReference>
<dbReference type="InterPro" id="IPR014721">
    <property type="entry name" value="Ribsml_uS5_D2-typ_fold_subgr"/>
</dbReference>
<dbReference type="NCBIfam" id="TIGR01240">
    <property type="entry name" value="mevDPdecarb"/>
    <property type="match status" value="1"/>
</dbReference>
<dbReference type="PANTHER" id="PTHR10977">
    <property type="entry name" value="DIPHOSPHOMEVALONATE DECARBOXYLASE"/>
    <property type="match status" value="1"/>
</dbReference>
<dbReference type="PANTHER" id="PTHR10977:SF3">
    <property type="entry name" value="DIPHOSPHOMEVALONATE DECARBOXYLASE"/>
    <property type="match status" value="1"/>
</dbReference>
<dbReference type="Pfam" id="PF18376">
    <property type="entry name" value="MDD_C"/>
    <property type="match status" value="1"/>
</dbReference>
<dbReference type="Pfam" id="PF22700">
    <property type="entry name" value="MVD-like_N"/>
    <property type="match status" value="1"/>
</dbReference>
<dbReference type="PIRSF" id="PIRSF015950">
    <property type="entry name" value="Mev_P_decrbx"/>
    <property type="match status" value="1"/>
</dbReference>
<dbReference type="SUPFAM" id="SSF55060">
    <property type="entry name" value="GHMP Kinase, C-terminal domain"/>
    <property type="match status" value="1"/>
</dbReference>
<dbReference type="SUPFAM" id="SSF54211">
    <property type="entry name" value="Ribosomal protein S5 domain 2-like"/>
    <property type="match status" value="1"/>
</dbReference>
<gene>
    <name evidence="6" type="primary">MVD1</name>
    <name evidence="7" type="synonym">MDD1</name>
    <name evidence="6" type="synonym">MVD</name>
    <name evidence="10" type="ordered locus">At2g38700</name>
</gene>
<keyword id="KW-0002">3D-structure</keyword>
<keyword id="KW-0067">ATP-binding</keyword>
<keyword id="KW-0444">Lipid biosynthesis</keyword>
<keyword id="KW-0443">Lipid metabolism</keyword>
<keyword id="KW-0456">Lyase</keyword>
<keyword id="KW-0547">Nucleotide-binding</keyword>
<keyword id="KW-0576">Peroxisome</keyword>
<keyword id="KW-1185">Reference proteome</keyword>
<keyword id="KW-0752">Steroid biosynthesis</keyword>
<keyword id="KW-0753">Steroid metabolism</keyword>
<keyword id="KW-0756">Sterol biosynthesis</keyword>
<keyword id="KW-1207">Sterol metabolism</keyword>
<comment type="function">
    <text evidence="1 4">Performs the first committed step in the biosynthesis of isoprene-containing compounds such as sterols and terpenoids (PubMed:10344201, PubMed:26216978). Is specific for (R)-5-diphosphomevalonate (MVAPP). The catalytic efficiency with (R)-5-phosphomevalonate (MVAP) as substrate is 10000-fold lower than for MVAPP (PubMed:26216978). Can complement a yeast mutant defective in MVD activity (PubMed:10344201).</text>
</comment>
<comment type="catalytic activity">
    <reaction evidence="3 4">
        <text>(R)-5-diphosphomevalonate + ATP = isopentenyl diphosphate + ADP + phosphate + CO2</text>
        <dbReference type="Rhea" id="RHEA:23732"/>
        <dbReference type="ChEBI" id="CHEBI:16526"/>
        <dbReference type="ChEBI" id="CHEBI:30616"/>
        <dbReference type="ChEBI" id="CHEBI:43474"/>
        <dbReference type="ChEBI" id="CHEBI:57557"/>
        <dbReference type="ChEBI" id="CHEBI:128769"/>
        <dbReference type="ChEBI" id="CHEBI:456216"/>
        <dbReference type="EC" id="4.1.1.33"/>
    </reaction>
</comment>
<comment type="biophysicochemical properties">
    <kinetics>
        <KM evidence="3">15.7 uM for (R)-5-diphosphomevalonate</KM>
        <KM evidence="4">26 uM for (R)-5-diphosphomevalonate</KM>
        <KM evidence="4">2800 uM for (R)-5-phosphomevalonate</KM>
        <text evidence="3 4">kcat is 2.0 sec(-1) with (R)-5-diphosphomevalonate as substrate (PubMed:24327557). kcat is 3.2 sec(-1) with (R)-5-diphosphomevalonate as substrate (PubMed:26216978). kcat is 0.033 sec(-1) with (R)-5-phosphomevalonate as substrate (PubMed:26216978).</text>
    </kinetics>
</comment>
<comment type="pathway">
    <text evidence="8">Isoprenoid biosynthesis; isopentenyl diphosphate biosynthesis via mevalonate pathway; isopentenyl diphosphate from (R)-mevalonate: step 3/3.</text>
</comment>
<comment type="subunit">
    <text evidence="1">Homodimer.</text>
</comment>
<comment type="subcellular location">
    <subcellularLocation>
        <location evidence="2">Peroxisome</location>
    </subcellularLocation>
</comment>
<comment type="disruption phenotype">
    <text evidence="4">Decreased contents of campesterol and sitosterol (by 50% and 30%, respectively, compared with wild type). Decreased emissions of beta-caryophyllene (by 35% compared with wild-type).</text>
</comment>
<comment type="similarity">
    <text evidence="8">Belongs to the diphosphomevalonate decarboxylase family.</text>
</comment>
<comment type="sequence caution" evidence="8">
    <conflict type="erroneous initiation">
        <sequence resource="EMBL-CDS" id="AAM64988"/>
    </conflict>
    <text>Truncated N-terminus.</text>
</comment>
<sequence length="412" mass="45586">MAEEKWVVMVTAQTPTNIAVIKYWGKRDEVRILPINDSISVTLDPDHLCTLTTVAVSPSFDRDRMWLNGKEISLSGSRYQNCLREIRSRADDVEDKEKGIKIAKKDWEKLHLHIASHNNFPTAAGLASSAAGFACLVFALAKLMNVNEDPSQLSAIARQGSGSACRSLFGGFVKWNMGNKEDGSDSVAVQLVDDKHWDDLVIIIAVVSSRQKETSSTSGMRESVETSLLLQHRAKEVVPVRILQMEEAIKNRDFTSFTKLTCSDSNQFHAVCMDTSPPIFYMNDTSHRIISLVEKWNRSAGTPEIAYTFDAGPNAVMIARNRKVAVELLQGLLYCFPPKPDTDMKSYVLGDTSIVKEAGLEGELPQGIKDKIGSQDQKGEVSYFICSRPGRGPVVLQDQTQALLHPQTGLPK</sequence>
<feature type="chain" id="PRO_0000435607" description="Diphosphomevalonate decarboxylase MVD1, peroxisomal">
    <location>
        <begin position="1"/>
        <end position="412"/>
    </location>
</feature>
<feature type="short sequence motif" description="Peroxisomal targeting signal PTS2" evidence="9">
    <location>
        <begin position="40"/>
        <end position="48"/>
    </location>
</feature>
<feature type="binding site" evidence="5 11">
    <location>
        <begin position="23"/>
        <end position="26"/>
    </location>
    <ligand>
        <name>(R)-5-diphosphomevalonate</name>
        <dbReference type="ChEBI" id="CHEBI:57557"/>
    </ligand>
</feature>
<feature type="binding site" evidence="5 11">
    <location>
        <position position="78"/>
    </location>
    <ligand>
        <name>(R)-5-diphosphomevalonate</name>
        <dbReference type="ChEBI" id="CHEBI:57557"/>
    </ligand>
</feature>
<feature type="binding site" evidence="5 11">
    <location>
        <begin position="161"/>
        <end position="166"/>
    </location>
    <ligand>
        <name>(R)-5-diphosphomevalonate</name>
        <dbReference type="ChEBI" id="CHEBI:57557"/>
    </ligand>
</feature>
<feature type="binding site" evidence="5 11">
    <location>
        <position position="217"/>
    </location>
    <ligand>
        <name>(R)-5-diphosphomevalonate</name>
        <dbReference type="ChEBI" id="CHEBI:57557"/>
    </ligand>
</feature>
<feature type="strand" evidence="12">
    <location>
        <begin position="8"/>
        <end position="14"/>
    </location>
</feature>
<feature type="strand" evidence="12">
    <location>
        <begin position="17"/>
        <end position="21"/>
    </location>
</feature>
<feature type="strand" evidence="12">
    <location>
        <begin position="26"/>
        <end position="28"/>
    </location>
</feature>
<feature type="turn" evidence="12">
    <location>
        <begin position="29"/>
        <end position="32"/>
    </location>
</feature>
<feature type="strand" evidence="12">
    <location>
        <begin position="33"/>
        <end position="36"/>
    </location>
</feature>
<feature type="strand" evidence="12">
    <location>
        <begin position="38"/>
        <end position="43"/>
    </location>
</feature>
<feature type="turn" evidence="12">
    <location>
        <begin position="46"/>
        <end position="48"/>
    </location>
</feature>
<feature type="strand" evidence="12">
    <location>
        <begin position="50"/>
        <end position="56"/>
    </location>
</feature>
<feature type="strand" evidence="12">
    <location>
        <begin position="64"/>
        <end position="67"/>
    </location>
</feature>
<feature type="strand" evidence="12">
    <location>
        <begin position="70"/>
        <end position="72"/>
    </location>
</feature>
<feature type="helix" evidence="12">
    <location>
        <begin position="77"/>
        <end position="87"/>
    </location>
</feature>
<feature type="strand" evidence="12">
    <location>
        <begin position="93"/>
        <end position="95"/>
    </location>
</feature>
<feature type="turn" evidence="12">
    <location>
        <begin position="96"/>
        <end position="99"/>
    </location>
</feature>
<feature type="strand" evidence="12">
    <location>
        <begin position="100"/>
        <end position="102"/>
    </location>
</feature>
<feature type="helix" evidence="12">
    <location>
        <begin position="104"/>
        <end position="108"/>
    </location>
</feature>
<feature type="strand" evidence="12">
    <location>
        <begin position="112"/>
        <end position="120"/>
    </location>
</feature>
<feature type="turn" evidence="12">
    <location>
        <begin position="122"/>
        <end position="124"/>
    </location>
</feature>
<feature type="helix" evidence="12">
    <location>
        <begin position="128"/>
        <end position="143"/>
    </location>
</feature>
<feature type="helix" evidence="12">
    <location>
        <begin position="150"/>
        <end position="158"/>
    </location>
</feature>
<feature type="helix" evidence="12">
    <location>
        <begin position="162"/>
        <end position="168"/>
    </location>
</feature>
<feature type="strand" evidence="12">
    <location>
        <begin position="169"/>
        <end position="175"/>
    </location>
</feature>
<feature type="strand" evidence="12">
    <location>
        <begin position="188"/>
        <end position="192"/>
    </location>
</feature>
<feature type="turn" evidence="12">
    <location>
        <begin position="196"/>
        <end position="199"/>
    </location>
</feature>
<feature type="strand" evidence="12">
    <location>
        <begin position="201"/>
        <end position="207"/>
    </location>
</feature>
<feature type="helix" evidence="12">
    <location>
        <begin position="216"/>
        <end position="226"/>
    </location>
</feature>
<feature type="helix" evidence="12">
    <location>
        <begin position="230"/>
        <end position="236"/>
    </location>
</feature>
<feature type="helix" evidence="12">
    <location>
        <begin position="238"/>
        <end position="250"/>
    </location>
</feature>
<feature type="helix" evidence="12">
    <location>
        <begin position="254"/>
        <end position="273"/>
    </location>
</feature>
<feature type="strand" evidence="12">
    <location>
        <begin position="275"/>
        <end position="277"/>
    </location>
</feature>
<feature type="helix" evidence="12">
    <location>
        <begin position="284"/>
        <end position="298"/>
    </location>
</feature>
<feature type="strand" evidence="12">
    <location>
        <begin position="305"/>
        <end position="309"/>
    </location>
</feature>
<feature type="strand" evidence="12">
    <location>
        <begin position="311"/>
        <end position="313"/>
    </location>
</feature>
<feature type="strand" evidence="12">
    <location>
        <begin position="315"/>
        <end position="321"/>
    </location>
</feature>
<feature type="helix" evidence="12">
    <location>
        <begin position="322"/>
        <end position="335"/>
    </location>
</feature>
<feature type="strand" evidence="12">
    <location>
        <begin position="339"/>
        <end position="341"/>
    </location>
</feature>
<feature type="helix" evidence="12">
    <location>
        <begin position="344"/>
        <end position="347"/>
    </location>
</feature>
<feature type="strand" evidence="12">
    <location>
        <begin position="348"/>
        <end position="350"/>
    </location>
</feature>
<feature type="turn" evidence="12">
    <location>
        <begin position="353"/>
        <end position="355"/>
    </location>
</feature>
<feature type="turn" evidence="12">
    <location>
        <begin position="366"/>
        <end position="368"/>
    </location>
</feature>
<feature type="helix" evidence="12">
    <location>
        <begin position="369"/>
        <end position="372"/>
    </location>
</feature>
<feature type="strand" evidence="12">
    <location>
        <begin position="380"/>
        <end position="387"/>
    </location>
</feature>
<feature type="helix" evidence="12">
    <location>
        <begin position="399"/>
        <end position="401"/>
    </location>
</feature>
<feature type="turn" evidence="12">
    <location>
        <begin position="406"/>
        <end position="408"/>
    </location>
</feature>